<comment type="function">
    <text evidence="1">Capsid protein (CA) is the structural component of the virus-like particle (VLP), forming the shell that encapsulates the retrotransposons dimeric RNA genome. The particles are assembled from trimer-clustered units and there are holes in the capsid shells that allow for the diffusion of macromolecules. CA also has nucleocapsid-like chaperone activity, promoting primer tRNA(i)-Met annealing to the multipartite primer-binding site (PBS), dimerization of Ty1 RNA and initiation of reverse transcription (By similarity).</text>
</comment>
<comment type="subunit">
    <text evidence="1">Homotrimer.</text>
</comment>
<comment type="subcellular location">
    <subcellularLocation>
        <location evidence="1">Cytoplasm</location>
    </subcellularLocation>
</comment>
<comment type="alternative products">
    <event type="ribosomal frameshifting"/>
    <isoform>
        <id>P0C2I8-1</id>
        <name>Transposon Ty1-LR4 Gag polyprotein</name>
        <sequence type="displayed"/>
    </isoform>
    <isoform>
        <id>P0C2I7-1</id>
        <name>Transposon Ty1-LR4 Gag-Pol polyprotein</name>
        <sequence type="external"/>
    </isoform>
    <text evidence="1">The Gag-Pol polyprotein is generated by a +1 ribosomal frameshift. The ratio of Gag:Gag-Pol varies between 20:1 and 5:1 (By similarity).</text>
</comment>
<comment type="induction">
    <text evidence="4">Ty1-LR4 is a highly expressed element. Induced under amino acid starvation conditions by GCN4.</text>
</comment>
<comment type="domain">
    <text evidence="1">The C-terminal RNA-binding region of CA is sufficient for all its nucleocapsid-like chaperone activities.</text>
</comment>
<comment type="miscellaneous">
    <text>Retrotransposons are mobile genetic entities that are able to replicate via an RNA intermediate and a reverse transcription step. In contrast to retroviruses, retrotransposons are non-infectious, lack an envelope and remain intracellular. Ty1 retrotransposons belong to the copia elements (pseudoviridae).</text>
</comment>
<comment type="miscellaneous">
    <molecule>Isoform Transposon Ty1-LR4 Gag polyprotein</molecule>
    <text>Produced by conventional translation.</text>
</comment>
<feature type="chain" id="PRO_0000279114" description="Transposon Ty1-LR4 Gag polyprotein">
    <location>
        <begin position="1"/>
        <end position="440"/>
    </location>
</feature>
<feature type="chain" id="PRO_0000279115" description="Capsid protein" evidence="1">
    <location>
        <begin position="1"/>
        <end position="401"/>
    </location>
</feature>
<feature type="peptide" id="PRO_0000279116" description="Gag-p4" evidence="1">
    <location>
        <begin position="402"/>
        <end position="440"/>
    </location>
</feature>
<feature type="region of interest" description="Disordered" evidence="3">
    <location>
        <begin position="1"/>
        <end position="93"/>
    </location>
</feature>
<feature type="region of interest" description="Disordered" evidence="3">
    <location>
        <begin position="126"/>
        <end position="173"/>
    </location>
</feature>
<feature type="region of interest" description="RNA-binding" evidence="1">
    <location>
        <begin position="299"/>
        <end position="401"/>
    </location>
</feature>
<feature type="region of interest" description="Disordered" evidence="3">
    <location>
        <begin position="352"/>
        <end position="440"/>
    </location>
</feature>
<feature type="compositionally biased region" description="Polar residues" evidence="3">
    <location>
        <begin position="1"/>
        <end position="10"/>
    </location>
</feature>
<feature type="compositionally biased region" description="Polar residues" evidence="3">
    <location>
        <begin position="48"/>
        <end position="60"/>
    </location>
</feature>
<feature type="compositionally biased region" description="Polar residues" evidence="3">
    <location>
        <begin position="127"/>
        <end position="152"/>
    </location>
</feature>
<feature type="compositionally biased region" description="Low complexity" evidence="3">
    <location>
        <begin position="153"/>
        <end position="165"/>
    </location>
</feature>
<feature type="compositionally biased region" description="Low complexity" evidence="3">
    <location>
        <begin position="402"/>
        <end position="418"/>
    </location>
</feature>
<feature type="compositionally biased region" description="Polar residues" evidence="3">
    <location>
        <begin position="419"/>
        <end position="428"/>
    </location>
</feature>
<feature type="compositionally biased region" description="Basic and acidic residues" evidence="3">
    <location>
        <begin position="429"/>
        <end position="440"/>
    </location>
</feature>
<feature type="site" description="Cleavage; by Ty1 protease" evidence="1">
    <location>
        <begin position="401"/>
        <end position="402"/>
    </location>
</feature>
<feature type="modified residue" description="Phosphoserine" evidence="2">
    <location>
        <position position="416"/>
    </location>
</feature>
<reference key="1">
    <citation type="journal article" date="1997" name="Nature">
        <title>The nucleotide sequence of Saccharomyces cerevisiae chromosome XII.</title>
        <authorList>
            <person name="Johnston M."/>
            <person name="Hillier L.W."/>
            <person name="Riles L."/>
            <person name="Albermann K."/>
            <person name="Andre B."/>
            <person name="Ansorge W."/>
            <person name="Benes V."/>
            <person name="Brueckner M."/>
            <person name="Delius H."/>
            <person name="Dubois E."/>
            <person name="Duesterhoeft A."/>
            <person name="Entian K.-D."/>
            <person name="Floeth M."/>
            <person name="Goffeau A."/>
            <person name="Hebling U."/>
            <person name="Heumann K."/>
            <person name="Heuss-Neitzel D."/>
            <person name="Hilbert H."/>
            <person name="Hilger F."/>
            <person name="Kleine K."/>
            <person name="Koetter P."/>
            <person name="Louis E.J."/>
            <person name="Messenguy F."/>
            <person name="Mewes H.-W."/>
            <person name="Miosga T."/>
            <person name="Moestl D."/>
            <person name="Mueller-Auer S."/>
            <person name="Nentwich U."/>
            <person name="Obermaier B."/>
            <person name="Piravandi E."/>
            <person name="Pohl T.M."/>
            <person name="Portetelle D."/>
            <person name="Purnelle B."/>
            <person name="Rechmann S."/>
            <person name="Rieger M."/>
            <person name="Rinke M."/>
            <person name="Rose M."/>
            <person name="Scharfe M."/>
            <person name="Scherens B."/>
            <person name="Scholler P."/>
            <person name="Schwager C."/>
            <person name="Schwarz S."/>
            <person name="Underwood A.P."/>
            <person name="Urrestarazu L.A."/>
            <person name="Vandenbol M."/>
            <person name="Verhasselt P."/>
            <person name="Vierendeels F."/>
            <person name="Voet M."/>
            <person name="Volckaert G."/>
            <person name="Voss H."/>
            <person name="Wambutt R."/>
            <person name="Wedler E."/>
            <person name="Wedler H."/>
            <person name="Zimmermann F.K."/>
            <person name="Zollner A."/>
            <person name="Hani J."/>
            <person name="Hoheisel J.D."/>
        </authorList>
    </citation>
    <scope>NUCLEOTIDE SEQUENCE [LARGE SCALE GENOMIC DNA]</scope>
    <source>
        <strain>ATCC 204508 / S288c</strain>
    </source>
</reference>
<reference key="2">
    <citation type="journal article" date="2014" name="G3 (Bethesda)">
        <title>The reference genome sequence of Saccharomyces cerevisiae: Then and now.</title>
        <authorList>
            <person name="Engel S.R."/>
            <person name="Dietrich F.S."/>
            <person name="Fisk D.G."/>
            <person name="Binkley G."/>
            <person name="Balakrishnan R."/>
            <person name="Costanzo M.C."/>
            <person name="Dwight S.S."/>
            <person name="Hitz B.C."/>
            <person name="Karra K."/>
            <person name="Nash R.S."/>
            <person name="Weng S."/>
            <person name="Wong E.D."/>
            <person name="Lloyd P."/>
            <person name="Skrzypek M.S."/>
            <person name="Miyasato S.R."/>
            <person name="Simison M."/>
            <person name="Cherry J.M."/>
        </authorList>
    </citation>
    <scope>GENOME REANNOTATION</scope>
    <source>
        <strain>ATCC 204508 / S288c</strain>
    </source>
</reference>
<reference key="3">
    <citation type="journal article" date="1998" name="Genome Res.">
        <title>Transposable elements and genome organization: a comprehensive survey of retrotransposons revealed by the complete Saccharomyces cerevisiae genome sequence.</title>
        <authorList>
            <person name="Kim J.M."/>
            <person name="Vanguri S."/>
            <person name="Boeke J.D."/>
            <person name="Gabriel A."/>
            <person name="Voytas D.F."/>
        </authorList>
    </citation>
    <scope>NOMENCLATURE</scope>
</reference>
<reference key="4">
    <citation type="journal article" date="2002" name="Mol. Cell. Biol.">
        <title>Differential effects of chromatin and Gcn4 on the 50-fold range of expression among individual yeast Ty1 retrotransposons.</title>
        <authorList>
            <person name="Morillon A."/>
            <person name="Benard L."/>
            <person name="Springer M."/>
            <person name="Lesage P."/>
        </authorList>
    </citation>
    <scope>INDUCTION</scope>
</reference>
<reference key="5">
    <citation type="journal article" date="2005" name="Cytogenet. Genome Res.">
        <title>Happy together: the life and times of Ty retrotransposons and their hosts.</title>
        <authorList>
            <person name="Lesage P."/>
            <person name="Todeschini A.L."/>
        </authorList>
    </citation>
    <scope>REVIEW</scope>
</reference>
<keyword id="KW-0963">Cytoplasm</keyword>
<keyword id="KW-0597">Phosphoprotein</keyword>
<keyword id="KW-1185">Reference proteome</keyword>
<keyword id="KW-0688">Ribosomal frameshifting</keyword>
<keyword id="KW-0694">RNA-binding</keyword>
<keyword id="KW-0814">Transposable element</keyword>
<dbReference type="EMBL" id="U20865">
    <property type="status" value="NOT_ANNOTATED_CDS"/>
    <property type="molecule type" value="Genomic_DNA"/>
</dbReference>
<dbReference type="EMBL" id="BK006945">
    <property type="protein sequence ID" value="DAA09569.1"/>
    <property type="molecule type" value="Genomic_DNA"/>
</dbReference>
<dbReference type="PIR" id="S69964">
    <property type="entry name" value="S69964"/>
</dbReference>
<dbReference type="RefSeq" id="NP_058173.1">
    <molecule id="P0C2I8-1"/>
    <property type="nucleotide sequence ID" value="NM_001184409.1"/>
</dbReference>
<dbReference type="SMR" id="P0C2I8"/>
<dbReference type="BioGRID" id="31523">
    <property type="interactions" value="4"/>
</dbReference>
<dbReference type="FunCoup" id="P0C2I8">
    <property type="interactions" value="85"/>
</dbReference>
<dbReference type="IntAct" id="P0C2I8">
    <property type="interactions" value="3"/>
</dbReference>
<dbReference type="MINT" id="P0C2I8"/>
<dbReference type="GlyGen" id="P0C2I8">
    <property type="glycosylation" value="2 sites"/>
</dbReference>
<dbReference type="PaxDb" id="4932-YLR256W-A"/>
<dbReference type="PeptideAtlas" id="P0C2I8"/>
<dbReference type="GeneID" id="850959"/>
<dbReference type="KEGG" id="sce:YLR256W-A"/>
<dbReference type="AGR" id="SGD:S000007377"/>
<dbReference type="SGD" id="S000007377">
    <property type="gene designation" value="YLR256W-A"/>
</dbReference>
<dbReference type="VEuPathDB" id="FungiDB:YLR256W-A"/>
<dbReference type="eggNOG" id="KOG0017">
    <property type="taxonomic scope" value="Eukaryota"/>
</dbReference>
<dbReference type="HOGENOM" id="CLU_045291_1_0_1"/>
<dbReference type="InParanoid" id="P0C2I8"/>
<dbReference type="OrthoDB" id="4046078at2759"/>
<dbReference type="BioGRID-ORCS" id="850959">
    <property type="hits" value="0 hits in 10 CRISPR screens"/>
</dbReference>
<dbReference type="Proteomes" id="UP000002311">
    <property type="component" value="Chromosome XII"/>
</dbReference>
<dbReference type="RNAct" id="P0C2I8">
    <property type="molecule type" value="protein"/>
</dbReference>
<dbReference type="GO" id="GO:0005737">
    <property type="term" value="C:cytoplasm"/>
    <property type="evidence" value="ECO:0007669"/>
    <property type="project" value="UniProtKB-SubCell"/>
</dbReference>
<dbReference type="GO" id="GO:0003723">
    <property type="term" value="F:RNA binding"/>
    <property type="evidence" value="ECO:0007669"/>
    <property type="project" value="UniProtKB-KW"/>
</dbReference>
<dbReference type="GO" id="GO:0075523">
    <property type="term" value="P:viral translational frameshifting"/>
    <property type="evidence" value="ECO:0007669"/>
    <property type="project" value="UniProtKB-KW"/>
</dbReference>
<dbReference type="InterPro" id="IPR015820">
    <property type="entry name" value="TYA"/>
</dbReference>
<dbReference type="Pfam" id="PF01021">
    <property type="entry name" value="TYA"/>
    <property type="match status" value="1"/>
</dbReference>
<gene>
    <name type="primary">TY1A-LR4</name>
    <name type="synonym">YLRWTy1-4 GAG</name>
    <name type="ordered locus">YLR256W-A</name>
    <name type="ORF">L9672.1</name>
</gene>
<accession>P0C2I8</accession>
<accession>D6VYQ3</accession>
<protein>
    <recommendedName>
        <fullName>Transposon Ty1-LR4 Gag polyprotein</fullName>
    </recommendedName>
    <alternativeName>
        <fullName>Gag-p49</fullName>
    </alternativeName>
    <alternativeName>
        <fullName>Transposon Ty1 protein A</fullName>
        <shortName>TY1A</shortName>
        <shortName>TYA</shortName>
    </alternativeName>
    <alternativeName>
        <fullName>p58</fullName>
    </alternativeName>
    <component>
        <recommendedName>
            <fullName>Capsid protein</fullName>
            <shortName>CA</shortName>
        </recommendedName>
        <alternativeName>
            <fullName>Gag-p45</fullName>
        </alternativeName>
        <alternativeName>
            <fullName>p54</fullName>
        </alternativeName>
    </component>
    <component>
        <recommendedName>
            <fullName>Gag-p4</fullName>
        </recommendedName>
    </component>
</protein>
<name>YL14A_YEAST</name>
<sequence>MESQQLSQHPHISHGSACASVTSKEVHTNQDPLDVSASKTEECEKASTKANSQQTTTPASSAVPENPHHASPQPASVPPPQNGPYPQQCMMTQNQANPSGWSFYGHPSMIPYTPYQMSPMYFPPGPQSQFPQYPSSVGTPLSTPSPESGNTFTDSSSADSDMTSTKKYVRPPPMLTSPNDFPNWVKTYIKFLQNSNLGGIIPTVNGKPVRQITDDELTFLYNTFQIFAPSQFLPTWVKDILSVDYTDIMKILSKSIEKMQSDTQEANDIVTLANLQYNGSTPADAFETKVTNIIDRLNNNGIHINNKVACQLIMRGLSGEYKFLRYTRHRHLNMTVAELFLDIHAIYEEQQGSRNSKPNYRRNLSDEKNDSRSYTNTTKPKVIARNPQKTNNSKSKTARAHNVSTSNNSPSTDNDSISKSTTEPIQLNNKHDLHLRPGTY</sequence>
<organism>
    <name type="scientific">Saccharomyces cerevisiae (strain ATCC 204508 / S288c)</name>
    <name type="common">Baker's yeast</name>
    <dbReference type="NCBI Taxonomy" id="559292"/>
    <lineage>
        <taxon>Eukaryota</taxon>
        <taxon>Fungi</taxon>
        <taxon>Dikarya</taxon>
        <taxon>Ascomycota</taxon>
        <taxon>Saccharomycotina</taxon>
        <taxon>Saccharomycetes</taxon>
        <taxon>Saccharomycetales</taxon>
        <taxon>Saccharomycetaceae</taxon>
        <taxon>Saccharomyces</taxon>
    </lineage>
</organism>
<proteinExistence type="evidence at transcript level"/>
<evidence type="ECO:0000250" key="1"/>
<evidence type="ECO:0000250" key="2">
    <source>
        <dbReference type="UniProtKB" id="Q12441"/>
    </source>
</evidence>
<evidence type="ECO:0000256" key="3">
    <source>
        <dbReference type="SAM" id="MobiDB-lite"/>
    </source>
</evidence>
<evidence type="ECO:0000269" key="4">
    <source>
    </source>
</evidence>